<protein>
    <recommendedName>
        <fullName evidence="1">Shikimate dehydrogenase (NADP(+))</fullName>
        <shortName evidence="1">SDH</shortName>
        <ecNumber evidence="1">1.1.1.25</ecNumber>
    </recommendedName>
</protein>
<dbReference type="EC" id="1.1.1.25" evidence="1"/>
<dbReference type="EMBL" id="CR936503">
    <property type="protein sequence ID" value="CAI55193.1"/>
    <property type="molecule type" value="Genomic_DNA"/>
</dbReference>
<dbReference type="RefSeq" id="WP_011374594.1">
    <property type="nucleotide sequence ID" value="NC_007576.1"/>
</dbReference>
<dbReference type="SMR" id="Q38X88"/>
<dbReference type="STRING" id="314315.LCA_0892"/>
<dbReference type="GeneID" id="57133749"/>
<dbReference type="KEGG" id="lsa:LCA_0892"/>
<dbReference type="eggNOG" id="COG0169">
    <property type="taxonomic scope" value="Bacteria"/>
</dbReference>
<dbReference type="HOGENOM" id="CLU_044063_4_1_9"/>
<dbReference type="OrthoDB" id="9792692at2"/>
<dbReference type="UniPathway" id="UPA00053">
    <property type="reaction ID" value="UER00087"/>
</dbReference>
<dbReference type="Proteomes" id="UP000002707">
    <property type="component" value="Chromosome"/>
</dbReference>
<dbReference type="GO" id="GO:0050661">
    <property type="term" value="F:NADP binding"/>
    <property type="evidence" value="ECO:0007669"/>
    <property type="project" value="InterPro"/>
</dbReference>
<dbReference type="GO" id="GO:0004764">
    <property type="term" value="F:shikimate 3-dehydrogenase (NADP+) activity"/>
    <property type="evidence" value="ECO:0007669"/>
    <property type="project" value="UniProtKB-UniRule"/>
</dbReference>
<dbReference type="GO" id="GO:0008652">
    <property type="term" value="P:amino acid biosynthetic process"/>
    <property type="evidence" value="ECO:0007669"/>
    <property type="project" value="UniProtKB-KW"/>
</dbReference>
<dbReference type="GO" id="GO:0009073">
    <property type="term" value="P:aromatic amino acid family biosynthetic process"/>
    <property type="evidence" value="ECO:0007669"/>
    <property type="project" value="UniProtKB-KW"/>
</dbReference>
<dbReference type="GO" id="GO:0009423">
    <property type="term" value="P:chorismate biosynthetic process"/>
    <property type="evidence" value="ECO:0007669"/>
    <property type="project" value="UniProtKB-UniRule"/>
</dbReference>
<dbReference type="GO" id="GO:0019632">
    <property type="term" value="P:shikimate metabolic process"/>
    <property type="evidence" value="ECO:0007669"/>
    <property type="project" value="InterPro"/>
</dbReference>
<dbReference type="CDD" id="cd01065">
    <property type="entry name" value="NAD_bind_Shikimate_DH"/>
    <property type="match status" value="1"/>
</dbReference>
<dbReference type="Gene3D" id="3.40.50.10860">
    <property type="entry name" value="Leucine Dehydrogenase, chain A, domain 1"/>
    <property type="match status" value="1"/>
</dbReference>
<dbReference type="Gene3D" id="3.40.50.720">
    <property type="entry name" value="NAD(P)-binding Rossmann-like Domain"/>
    <property type="match status" value="1"/>
</dbReference>
<dbReference type="HAMAP" id="MF_00222">
    <property type="entry name" value="Shikimate_DH_AroE"/>
    <property type="match status" value="1"/>
</dbReference>
<dbReference type="InterPro" id="IPR046346">
    <property type="entry name" value="Aminoacid_DH-like_N_sf"/>
</dbReference>
<dbReference type="InterPro" id="IPR036291">
    <property type="entry name" value="NAD(P)-bd_dom_sf"/>
</dbReference>
<dbReference type="InterPro" id="IPR041121">
    <property type="entry name" value="SDH_C"/>
</dbReference>
<dbReference type="InterPro" id="IPR011342">
    <property type="entry name" value="Shikimate_DH"/>
</dbReference>
<dbReference type="InterPro" id="IPR013708">
    <property type="entry name" value="Shikimate_DH-bd_N"/>
</dbReference>
<dbReference type="InterPro" id="IPR022893">
    <property type="entry name" value="Shikimate_DH_fam"/>
</dbReference>
<dbReference type="NCBIfam" id="TIGR00507">
    <property type="entry name" value="aroE"/>
    <property type="match status" value="1"/>
</dbReference>
<dbReference type="PANTHER" id="PTHR21089:SF1">
    <property type="entry name" value="BIFUNCTIONAL 3-DEHYDROQUINATE DEHYDRATASE_SHIKIMATE DEHYDROGENASE, CHLOROPLASTIC"/>
    <property type="match status" value="1"/>
</dbReference>
<dbReference type="PANTHER" id="PTHR21089">
    <property type="entry name" value="SHIKIMATE DEHYDROGENASE"/>
    <property type="match status" value="1"/>
</dbReference>
<dbReference type="Pfam" id="PF18317">
    <property type="entry name" value="SDH_C"/>
    <property type="match status" value="1"/>
</dbReference>
<dbReference type="Pfam" id="PF08501">
    <property type="entry name" value="Shikimate_dh_N"/>
    <property type="match status" value="1"/>
</dbReference>
<dbReference type="SUPFAM" id="SSF53223">
    <property type="entry name" value="Aminoacid dehydrogenase-like, N-terminal domain"/>
    <property type="match status" value="1"/>
</dbReference>
<dbReference type="SUPFAM" id="SSF51735">
    <property type="entry name" value="NAD(P)-binding Rossmann-fold domains"/>
    <property type="match status" value="1"/>
</dbReference>
<comment type="function">
    <text evidence="1">Involved in the biosynthesis of the chorismate, which leads to the biosynthesis of aromatic amino acids. Catalyzes the reversible NADPH linked reduction of 3-dehydroshikimate (DHSA) to yield shikimate (SA).</text>
</comment>
<comment type="catalytic activity">
    <reaction evidence="1">
        <text>shikimate + NADP(+) = 3-dehydroshikimate + NADPH + H(+)</text>
        <dbReference type="Rhea" id="RHEA:17737"/>
        <dbReference type="ChEBI" id="CHEBI:15378"/>
        <dbReference type="ChEBI" id="CHEBI:16630"/>
        <dbReference type="ChEBI" id="CHEBI:36208"/>
        <dbReference type="ChEBI" id="CHEBI:57783"/>
        <dbReference type="ChEBI" id="CHEBI:58349"/>
        <dbReference type="EC" id="1.1.1.25"/>
    </reaction>
</comment>
<comment type="pathway">
    <text evidence="1">Metabolic intermediate biosynthesis; chorismate biosynthesis; chorismate from D-erythrose 4-phosphate and phosphoenolpyruvate: step 4/7.</text>
</comment>
<comment type="subunit">
    <text evidence="1">Homodimer.</text>
</comment>
<comment type="similarity">
    <text evidence="1">Belongs to the shikimate dehydrogenase family.</text>
</comment>
<gene>
    <name evidence="1" type="primary">aroE</name>
    <name type="ordered locus">LCA_0892</name>
</gene>
<name>AROE_LATSS</name>
<evidence type="ECO:0000255" key="1">
    <source>
        <dbReference type="HAMAP-Rule" id="MF_00222"/>
    </source>
</evidence>
<organism>
    <name type="scientific">Latilactobacillus sakei subsp. sakei (strain 23K)</name>
    <name type="common">Lactobacillus sakei subsp. sakei</name>
    <dbReference type="NCBI Taxonomy" id="314315"/>
    <lineage>
        <taxon>Bacteria</taxon>
        <taxon>Bacillati</taxon>
        <taxon>Bacillota</taxon>
        <taxon>Bacilli</taxon>
        <taxon>Lactobacillales</taxon>
        <taxon>Lactobacillaceae</taxon>
        <taxon>Latilactobacillus</taxon>
    </lineage>
</organism>
<accession>Q38X88</accession>
<sequence length="290" mass="31237">MISGYTALYGLIAHPAQHSLSPFIHNTGFHQIQMDARYAVFDSQATPAAITSAIKTLGIRGVNLSMPYKQSLVPLVDNLTSTAKLVGAINTIKNEAGRLTATNTDGDGFWCALQKAHPQRRYRSVTILGAGGAALAVIEAAVRYGVQQVTVFKRANATYDSVIQRLAQISLASGLQIIVEPYDDQLALATALQNADCLINATNIGMTATPGNPLPINLLQYLPEDSLVADLIYAPRETAFLKTAQKAHYQIQNGLGMLIEQAALSFEFWTNESMATMPIYQHLTGGNDAS</sequence>
<proteinExistence type="inferred from homology"/>
<reference key="1">
    <citation type="journal article" date="2005" name="Nat. Biotechnol.">
        <title>The complete genome sequence of the meat-borne lactic acid bacterium Lactobacillus sakei 23K.</title>
        <authorList>
            <person name="Chaillou S."/>
            <person name="Champomier-Verges M.-C."/>
            <person name="Cornet M."/>
            <person name="Crutz-Le Coq A.-M."/>
            <person name="Dudez A.-M."/>
            <person name="Martin V."/>
            <person name="Beaufils S."/>
            <person name="Darbon-Rongere E."/>
            <person name="Bossy R."/>
            <person name="Loux V."/>
            <person name="Zagorec M."/>
        </authorList>
    </citation>
    <scope>NUCLEOTIDE SEQUENCE [LARGE SCALE GENOMIC DNA]</scope>
    <source>
        <strain>23K</strain>
    </source>
</reference>
<feature type="chain" id="PRO_0000325128" description="Shikimate dehydrogenase (NADP(+))">
    <location>
        <begin position="1"/>
        <end position="290"/>
    </location>
</feature>
<feature type="active site" description="Proton acceptor" evidence="1">
    <location>
        <position position="69"/>
    </location>
</feature>
<feature type="binding site" evidence="1">
    <location>
        <begin position="19"/>
        <end position="21"/>
    </location>
    <ligand>
        <name>shikimate</name>
        <dbReference type="ChEBI" id="CHEBI:36208"/>
    </ligand>
</feature>
<feature type="binding site" evidence="1">
    <location>
        <position position="65"/>
    </location>
    <ligand>
        <name>shikimate</name>
        <dbReference type="ChEBI" id="CHEBI:36208"/>
    </ligand>
</feature>
<feature type="binding site" evidence="1">
    <location>
        <position position="90"/>
    </location>
    <ligand>
        <name>shikimate</name>
        <dbReference type="ChEBI" id="CHEBI:36208"/>
    </ligand>
</feature>
<feature type="binding site" evidence="1">
    <location>
        <position position="105"/>
    </location>
    <ligand>
        <name>shikimate</name>
        <dbReference type="ChEBI" id="CHEBI:36208"/>
    </ligand>
</feature>
<feature type="binding site" evidence="1">
    <location>
        <begin position="129"/>
        <end position="133"/>
    </location>
    <ligand>
        <name>NADP(+)</name>
        <dbReference type="ChEBI" id="CHEBI:58349"/>
    </ligand>
</feature>
<feature type="binding site" evidence="1">
    <location>
        <position position="231"/>
    </location>
    <ligand>
        <name>NADP(+)</name>
        <dbReference type="ChEBI" id="CHEBI:58349"/>
    </ligand>
</feature>
<feature type="binding site" evidence="1">
    <location>
        <position position="233"/>
    </location>
    <ligand>
        <name>shikimate</name>
        <dbReference type="ChEBI" id="CHEBI:36208"/>
    </ligand>
</feature>
<feature type="binding site" evidence="1">
    <location>
        <position position="254"/>
    </location>
    <ligand>
        <name>NADP(+)</name>
        <dbReference type="ChEBI" id="CHEBI:58349"/>
    </ligand>
</feature>
<keyword id="KW-0028">Amino-acid biosynthesis</keyword>
<keyword id="KW-0057">Aromatic amino acid biosynthesis</keyword>
<keyword id="KW-0521">NADP</keyword>
<keyword id="KW-0560">Oxidoreductase</keyword>
<keyword id="KW-1185">Reference proteome</keyword>